<sequence length="141" mass="14951">MAVQRTFSIIKPDAVAKNVIGEITTRFEKAGLRVVASKLKQLSKAEAEGFYAEHSARGFFGDLVAFMISGPVVVQVLEGENAIALNRELMGATNPKEAAAGTIRADFADSIDANAVHGSDSEAAAAREISYFFAATEVTAR</sequence>
<evidence type="ECO:0000255" key="1">
    <source>
        <dbReference type="HAMAP-Rule" id="MF_00451"/>
    </source>
</evidence>
<gene>
    <name evidence="1" type="primary">ndk</name>
    <name type="ordered locus">PSPPH_1316</name>
</gene>
<protein>
    <recommendedName>
        <fullName evidence="1">Nucleoside diphosphate kinase</fullName>
        <shortName evidence="1">NDK</shortName>
        <shortName evidence="1">NDP kinase</shortName>
        <ecNumber evidence="1">2.7.4.6</ecNumber>
    </recommendedName>
    <alternativeName>
        <fullName evidence="1">Nucleoside-2-P kinase</fullName>
    </alternativeName>
</protein>
<reference key="1">
    <citation type="journal article" date="2005" name="J. Bacteriol.">
        <title>Whole-genome sequence analysis of Pseudomonas syringae pv. phaseolicola 1448A reveals divergence among pathovars in genes involved in virulence and transposition.</title>
        <authorList>
            <person name="Joardar V."/>
            <person name="Lindeberg M."/>
            <person name="Jackson R.W."/>
            <person name="Selengut J."/>
            <person name="Dodson R."/>
            <person name="Brinkac L.M."/>
            <person name="Daugherty S.C."/>
            <person name="DeBoy R.T."/>
            <person name="Durkin A.S."/>
            <person name="Gwinn Giglio M."/>
            <person name="Madupu R."/>
            <person name="Nelson W.C."/>
            <person name="Rosovitz M.J."/>
            <person name="Sullivan S.A."/>
            <person name="Crabtree J."/>
            <person name="Creasy T."/>
            <person name="Davidsen T.M."/>
            <person name="Haft D.H."/>
            <person name="Zafar N."/>
            <person name="Zhou L."/>
            <person name="Halpin R."/>
            <person name="Holley T."/>
            <person name="Khouri H.M."/>
            <person name="Feldblyum T.V."/>
            <person name="White O."/>
            <person name="Fraser C.M."/>
            <person name="Chatterjee A.K."/>
            <person name="Cartinhour S."/>
            <person name="Schneider D."/>
            <person name="Mansfield J.W."/>
            <person name="Collmer A."/>
            <person name="Buell R."/>
        </authorList>
    </citation>
    <scope>NUCLEOTIDE SEQUENCE [LARGE SCALE GENOMIC DNA]</scope>
    <source>
        <strain>1448A / Race 6</strain>
    </source>
</reference>
<proteinExistence type="inferred from homology"/>
<keyword id="KW-0067">ATP-binding</keyword>
<keyword id="KW-0963">Cytoplasm</keyword>
<keyword id="KW-0418">Kinase</keyword>
<keyword id="KW-0460">Magnesium</keyword>
<keyword id="KW-0479">Metal-binding</keyword>
<keyword id="KW-0546">Nucleotide metabolism</keyword>
<keyword id="KW-0547">Nucleotide-binding</keyword>
<keyword id="KW-0597">Phosphoprotein</keyword>
<keyword id="KW-0808">Transferase</keyword>
<organism>
    <name type="scientific">Pseudomonas savastanoi pv. phaseolicola (strain 1448A / Race 6)</name>
    <name type="common">Pseudomonas syringae pv. phaseolicola (strain 1448A / Race 6)</name>
    <dbReference type="NCBI Taxonomy" id="264730"/>
    <lineage>
        <taxon>Bacteria</taxon>
        <taxon>Pseudomonadati</taxon>
        <taxon>Pseudomonadota</taxon>
        <taxon>Gammaproteobacteria</taxon>
        <taxon>Pseudomonadales</taxon>
        <taxon>Pseudomonadaceae</taxon>
        <taxon>Pseudomonas</taxon>
    </lineage>
</organism>
<accession>Q48LZ8</accession>
<feature type="chain" id="PRO_0000226572" description="Nucleoside diphosphate kinase">
    <location>
        <begin position="1"/>
        <end position="141"/>
    </location>
</feature>
<feature type="active site" description="Pros-phosphohistidine intermediate" evidence="1">
    <location>
        <position position="117"/>
    </location>
</feature>
<feature type="binding site" evidence="1">
    <location>
        <position position="11"/>
    </location>
    <ligand>
        <name>ATP</name>
        <dbReference type="ChEBI" id="CHEBI:30616"/>
    </ligand>
</feature>
<feature type="binding site" evidence="1">
    <location>
        <position position="59"/>
    </location>
    <ligand>
        <name>ATP</name>
        <dbReference type="ChEBI" id="CHEBI:30616"/>
    </ligand>
</feature>
<feature type="binding site" evidence="1">
    <location>
        <position position="87"/>
    </location>
    <ligand>
        <name>ATP</name>
        <dbReference type="ChEBI" id="CHEBI:30616"/>
    </ligand>
</feature>
<feature type="binding site" evidence="1">
    <location>
        <position position="93"/>
    </location>
    <ligand>
        <name>ATP</name>
        <dbReference type="ChEBI" id="CHEBI:30616"/>
    </ligand>
</feature>
<feature type="binding site" evidence="1">
    <location>
        <position position="104"/>
    </location>
    <ligand>
        <name>ATP</name>
        <dbReference type="ChEBI" id="CHEBI:30616"/>
    </ligand>
</feature>
<feature type="binding site" evidence="1">
    <location>
        <position position="114"/>
    </location>
    <ligand>
        <name>ATP</name>
        <dbReference type="ChEBI" id="CHEBI:30616"/>
    </ligand>
</feature>
<dbReference type="EC" id="2.7.4.6" evidence="1"/>
<dbReference type="EMBL" id="CP000058">
    <property type="protein sequence ID" value="AAZ36735.1"/>
    <property type="molecule type" value="Genomic_DNA"/>
</dbReference>
<dbReference type="RefSeq" id="WP_002552482.1">
    <property type="nucleotide sequence ID" value="NC_005773.3"/>
</dbReference>
<dbReference type="SMR" id="Q48LZ8"/>
<dbReference type="GeneID" id="96217648"/>
<dbReference type="KEGG" id="psp:PSPPH_1316"/>
<dbReference type="eggNOG" id="COG0105">
    <property type="taxonomic scope" value="Bacteria"/>
</dbReference>
<dbReference type="HOGENOM" id="CLU_060216_8_1_6"/>
<dbReference type="Proteomes" id="UP000000551">
    <property type="component" value="Chromosome"/>
</dbReference>
<dbReference type="GO" id="GO:0005737">
    <property type="term" value="C:cytoplasm"/>
    <property type="evidence" value="ECO:0007669"/>
    <property type="project" value="UniProtKB-SubCell"/>
</dbReference>
<dbReference type="GO" id="GO:0005524">
    <property type="term" value="F:ATP binding"/>
    <property type="evidence" value="ECO:0007669"/>
    <property type="project" value="UniProtKB-UniRule"/>
</dbReference>
<dbReference type="GO" id="GO:0046872">
    <property type="term" value="F:metal ion binding"/>
    <property type="evidence" value="ECO:0007669"/>
    <property type="project" value="UniProtKB-KW"/>
</dbReference>
<dbReference type="GO" id="GO:0004550">
    <property type="term" value="F:nucleoside diphosphate kinase activity"/>
    <property type="evidence" value="ECO:0007669"/>
    <property type="project" value="UniProtKB-UniRule"/>
</dbReference>
<dbReference type="GO" id="GO:0006241">
    <property type="term" value="P:CTP biosynthetic process"/>
    <property type="evidence" value="ECO:0007669"/>
    <property type="project" value="UniProtKB-UniRule"/>
</dbReference>
<dbReference type="GO" id="GO:0006183">
    <property type="term" value="P:GTP biosynthetic process"/>
    <property type="evidence" value="ECO:0007669"/>
    <property type="project" value="UniProtKB-UniRule"/>
</dbReference>
<dbReference type="GO" id="GO:0006228">
    <property type="term" value="P:UTP biosynthetic process"/>
    <property type="evidence" value="ECO:0007669"/>
    <property type="project" value="UniProtKB-UniRule"/>
</dbReference>
<dbReference type="CDD" id="cd04413">
    <property type="entry name" value="NDPk_I"/>
    <property type="match status" value="1"/>
</dbReference>
<dbReference type="FunFam" id="3.30.70.141:FF:000001">
    <property type="entry name" value="Nucleoside diphosphate kinase"/>
    <property type="match status" value="1"/>
</dbReference>
<dbReference type="Gene3D" id="3.30.70.141">
    <property type="entry name" value="Nucleoside diphosphate kinase-like domain"/>
    <property type="match status" value="1"/>
</dbReference>
<dbReference type="HAMAP" id="MF_00451">
    <property type="entry name" value="NDP_kinase"/>
    <property type="match status" value="1"/>
</dbReference>
<dbReference type="InterPro" id="IPR034907">
    <property type="entry name" value="NDK-like_dom"/>
</dbReference>
<dbReference type="InterPro" id="IPR036850">
    <property type="entry name" value="NDK-like_dom_sf"/>
</dbReference>
<dbReference type="InterPro" id="IPR001564">
    <property type="entry name" value="Nucleoside_diP_kinase"/>
</dbReference>
<dbReference type="InterPro" id="IPR023005">
    <property type="entry name" value="Nucleoside_diP_kinase_AS"/>
</dbReference>
<dbReference type="NCBIfam" id="NF001908">
    <property type="entry name" value="PRK00668.1"/>
    <property type="match status" value="1"/>
</dbReference>
<dbReference type="PANTHER" id="PTHR46161">
    <property type="entry name" value="NUCLEOSIDE DIPHOSPHATE KINASE"/>
    <property type="match status" value="1"/>
</dbReference>
<dbReference type="PANTHER" id="PTHR46161:SF3">
    <property type="entry name" value="NUCLEOSIDE DIPHOSPHATE KINASE DDB_G0292928-RELATED"/>
    <property type="match status" value="1"/>
</dbReference>
<dbReference type="Pfam" id="PF00334">
    <property type="entry name" value="NDK"/>
    <property type="match status" value="1"/>
</dbReference>
<dbReference type="PRINTS" id="PR01243">
    <property type="entry name" value="NUCDPKINASE"/>
</dbReference>
<dbReference type="SMART" id="SM00562">
    <property type="entry name" value="NDK"/>
    <property type="match status" value="1"/>
</dbReference>
<dbReference type="SUPFAM" id="SSF54919">
    <property type="entry name" value="Nucleoside diphosphate kinase, NDK"/>
    <property type="match status" value="1"/>
</dbReference>
<dbReference type="PROSITE" id="PS00469">
    <property type="entry name" value="NDPK"/>
    <property type="match status" value="1"/>
</dbReference>
<dbReference type="PROSITE" id="PS51374">
    <property type="entry name" value="NDPK_LIKE"/>
    <property type="match status" value="1"/>
</dbReference>
<comment type="function">
    <text evidence="1">Major role in the synthesis of nucleoside triphosphates other than ATP. The ATP gamma phosphate is transferred to the NDP beta phosphate via a ping-pong mechanism, using a phosphorylated active-site intermediate.</text>
</comment>
<comment type="catalytic activity">
    <reaction evidence="1">
        <text>a 2'-deoxyribonucleoside 5'-diphosphate + ATP = a 2'-deoxyribonucleoside 5'-triphosphate + ADP</text>
        <dbReference type="Rhea" id="RHEA:44640"/>
        <dbReference type="ChEBI" id="CHEBI:30616"/>
        <dbReference type="ChEBI" id="CHEBI:61560"/>
        <dbReference type="ChEBI" id="CHEBI:73316"/>
        <dbReference type="ChEBI" id="CHEBI:456216"/>
        <dbReference type="EC" id="2.7.4.6"/>
    </reaction>
</comment>
<comment type="catalytic activity">
    <reaction evidence="1">
        <text>a ribonucleoside 5'-diphosphate + ATP = a ribonucleoside 5'-triphosphate + ADP</text>
        <dbReference type="Rhea" id="RHEA:18113"/>
        <dbReference type="ChEBI" id="CHEBI:30616"/>
        <dbReference type="ChEBI" id="CHEBI:57930"/>
        <dbReference type="ChEBI" id="CHEBI:61557"/>
        <dbReference type="ChEBI" id="CHEBI:456216"/>
        <dbReference type="EC" id="2.7.4.6"/>
    </reaction>
</comment>
<comment type="cofactor">
    <cofactor evidence="1">
        <name>Mg(2+)</name>
        <dbReference type="ChEBI" id="CHEBI:18420"/>
    </cofactor>
</comment>
<comment type="subunit">
    <text evidence="1">Homotetramer.</text>
</comment>
<comment type="subcellular location">
    <subcellularLocation>
        <location evidence="1">Cytoplasm</location>
    </subcellularLocation>
</comment>
<comment type="similarity">
    <text evidence="1">Belongs to the NDK family.</text>
</comment>
<name>NDK_PSE14</name>